<feature type="chain" id="PRO_1000196501" description="Putative septation protein SpoVG">
    <location>
        <begin position="1"/>
        <end position="103"/>
    </location>
</feature>
<keyword id="KW-0131">Cell cycle</keyword>
<keyword id="KW-0132">Cell division</keyword>
<keyword id="KW-1185">Reference proteome</keyword>
<keyword id="KW-0717">Septation</keyword>
<name>SP5G_EXIS2</name>
<evidence type="ECO:0000255" key="1">
    <source>
        <dbReference type="HAMAP-Rule" id="MF_00819"/>
    </source>
</evidence>
<accession>B1YGP4</accession>
<sequence length="103" mass="11418">MNVTDVKIRRVVAEGRMKALASITLDHEFVVHDLRVIEGNSGLFVAMPSKRTQEGIFRDVAHPINALMRKKVEDSVLEAYAIREENGEASELELAALEATDPS</sequence>
<reference key="1">
    <citation type="submission" date="2008-04" db="EMBL/GenBank/DDBJ databases">
        <title>Complete sequence of chromosome of Exiguobacterium sibiricum 255-15.</title>
        <authorList>
            <consortium name="US DOE Joint Genome Institute"/>
            <person name="Copeland A."/>
            <person name="Lucas S."/>
            <person name="Lapidus A."/>
            <person name="Glavina del Rio T."/>
            <person name="Dalin E."/>
            <person name="Tice H."/>
            <person name="Bruce D."/>
            <person name="Goodwin L."/>
            <person name="Pitluck S."/>
            <person name="Kiss H."/>
            <person name="Chertkov O."/>
            <person name="Monk C."/>
            <person name="Brettin T."/>
            <person name="Detter J.C."/>
            <person name="Han C."/>
            <person name="Kuske C.R."/>
            <person name="Schmutz J."/>
            <person name="Larimer F."/>
            <person name="Land M."/>
            <person name="Hauser L."/>
            <person name="Kyrpides N."/>
            <person name="Mikhailova N."/>
            <person name="Vishnivetskaya T."/>
            <person name="Rodrigues D.F."/>
            <person name="Gilichinsky D."/>
            <person name="Tiedje J."/>
            <person name="Richardson P."/>
        </authorList>
    </citation>
    <scope>NUCLEOTIDE SEQUENCE [LARGE SCALE GENOMIC DNA]</scope>
    <source>
        <strain>DSM 17290 / CCUG 55495 / CIP 109462 / JCM 13490 / 255-15</strain>
    </source>
</reference>
<organism>
    <name type="scientific">Exiguobacterium sibiricum (strain DSM 17290 / CCUG 55495 / CIP 109462 / JCM 13490 / 255-15)</name>
    <dbReference type="NCBI Taxonomy" id="262543"/>
    <lineage>
        <taxon>Bacteria</taxon>
        <taxon>Bacillati</taxon>
        <taxon>Bacillota</taxon>
        <taxon>Bacilli</taxon>
        <taxon>Bacillales</taxon>
        <taxon>Bacillales Family XII. Incertae Sedis</taxon>
        <taxon>Exiguobacterium</taxon>
    </lineage>
</organism>
<dbReference type="EMBL" id="CP001022">
    <property type="protein sequence ID" value="ACB59527.1"/>
    <property type="molecule type" value="Genomic_DNA"/>
</dbReference>
<dbReference type="RefSeq" id="WP_012368953.1">
    <property type="nucleotide sequence ID" value="NC_010556.1"/>
</dbReference>
<dbReference type="SMR" id="B1YGP4"/>
<dbReference type="STRING" id="262543.Exig_0040"/>
<dbReference type="KEGG" id="esi:Exig_0040"/>
<dbReference type="eggNOG" id="COG2088">
    <property type="taxonomic scope" value="Bacteria"/>
</dbReference>
<dbReference type="HOGENOM" id="CLU_103669_2_1_9"/>
<dbReference type="OrthoDB" id="9796286at2"/>
<dbReference type="Proteomes" id="UP000001681">
    <property type="component" value="Chromosome"/>
</dbReference>
<dbReference type="GO" id="GO:0000917">
    <property type="term" value="P:division septum assembly"/>
    <property type="evidence" value="ECO:0007669"/>
    <property type="project" value="UniProtKB-KW"/>
</dbReference>
<dbReference type="GO" id="GO:0030435">
    <property type="term" value="P:sporulation resulting in formation of a cellular spore"/>
    <property type="evidence" value="ECO:0007669"/>
    <property type="project" value="InterPro"/>
</dbReference>
<dbReference type="Gene3D" id="3.30.1120.40">
    <property type="entry name" value="Stage V sporulation protein G"/>
    <property type="match status" value="1"/>
</dbReference>
<dbReference type="HAMAP" id="MF_00819">
    <property type="entry name" value="SpoVG"/>
    <property type="match status" value="1"/>
</dbReference>
<dbReference type="InterPro" id="IPR007170">
    <property type="entry name" value="SpoVG"/>
</dbReference>
<dbReference type="InterPro" id="IPR036751">
    <property type="entry name" value="SpoVG_sf"/>
</dbReference>
<dbReference type="NCBIfam" id="NF009749">
    <property type="entry name" value="PRK13259.1"/>
    <property type="match status" value="1"/>
</dbReference>
<dbReference type="PANTHER" id="PTHR38429">
    <property type="entry name" value="SEPTATION PROTEIN SPOVG-RELATED"/>
    <property type="match status" value="1"/>
</dbReference>
<dbReference type="PANTHER" id="PTHR38429:SF1">
    <property type="entry name" value="SEPTATION PROTEIN SPOVG-RELATED"/>
    <property type="match status" value="1"/>
</dbReference>
<dbReference type="Pfam" id="PF04026">
    <property type="entry name" value="SpoVG"/>
    <property type="match status" value="1"/>
</dbReference>
<dbReference type="SUPFAM" id="SSF160537">
    <property type="entry name" value="SpoVG-like"/>
    <property type="match status" value="1"/>
</dbReference>
<comment type="function">
    <text evidence="1">Could be involved in septation.</text>
</comment>
<comment type="similarity">
    <text evidence="1">Belongs to the SpoVG family.</text>
</comment>
<gene>
    <name evidence="1" type="primary">spoVG</name>
    <name type="ordered locus">Exig_0040</name>
</gene>
<protein>
    <recommendedName>
        <fullName evidence="1">Putative septation protein SpoVG</fullName>
    </recommendedName>
</protein>
<proteinExistence type="inferred from homology"/>